<name>NHLC2_BOVIN</name>
<keyword id="KW-0963">Cytoplasm</keyword>
<keyword id="KW-1185">Reference proteome</keyword>
<keyword id="KW-0677">Repeat</keyword>
<proteinExistence type="evidence at transcript level"/>
<evidence type="ECO:0000250" key="1">
    <source>
        <dbReference type="UniProtKB" id="Q8BZW8"/>
    </source>
</evidence>
<evidence type="ECO:0000250" key="2">
    <source>
        <dbReference type="UniProtKB" id="Q8NBF2"/>
    </source>
</evidence>
<reference key="1">
    <citation type="submission" date="2007-03" db="EMBL/GenBank/DDBJ databases">
        <authorList>
            <consortium name="NIH - Mammalian Gene Collection (MGC) project"/>
        </authorList>
    </citation>
    <scope>NUCLEOTIDE SEQUENCE [LARGE SCALE MRNA]</scope>
    <source>
        <strain>Hereford</strain>
        <tissue>Fetal muscle</tissue>
        <tissue>Hypothalamus</tissue>
    </source>
</reference>
<protein>
    <recommendedName>
        <fullName>NHL repeat-containing protein 2</fullName>
    </recommendedName>
</protein>
<organism>
    <name type="scientific">Bos taurus</name>
    <name type="common">Bovine</name>
    <dbReference type="NCBI Taxonomy" id="9913"/>
    <lineage>
        <taxon>Eukaryota</taxon>
        <taxon>Metazoa</taxon>
        <taxon>Chordata</taxon>
        <taxon>Craniata</taxon>
        <taxon>Vertebrata</taxon>
        <taxon>Euteleostomi</taxon>
        <taxon>Mammalia</taxon>
        <taxon>Eutheria</taxon>
        <taxon>Laurasiatheria</taxon>
        <taxon>Artiodactyla</taxon>
        <taxon>Ruminantia</taxon>
        <taxon>Pecora</taxon>
        <taxon>Bovidae</taxon>
        <taxon>Bovinae</taxon>
        <taxon>Bos</taxon>
    </lineage>
</organism>
<comment type="function">
    <text evidence="1">Required for normal embryonic development.</text>
</comment>
<comment type="subunit">
    <text evidence="2">Monomer.</text>
</comment>
<comment type="subcellular location">
    <subcellularLocation>
        <location evidence="2">Cytoplasm</location>
        <location evidence="2">Cytosol</location>
    </subcellularLocation>
</comment>
<sequence length="726" mass="79314">MAAPGARSCNLSGLLPAQTSLEYALLDAVTQEEKDGLVYQYLQKVDGWEQDLLVPEFPEGLEWLNTEEPISVYKDLCGKVVILDFFTYCCINCIHLLPDLHALEHTYSDKDGLLIVGVHSAKFPNEKVLDNIRSAVLRYNITHPVVNDADASLWQELEVSCWPTLIILGPRGNMLFSLIGEGHKEKLFLYTSIALKYYKDRGQIRANKIGIKLYKDSLPPSPLLFPGKITVDHVSNRLVIADTGHHRILVVWKNGQIQYSIGGPNPGRKDGIFSESSFNSPQGVAIMNNIIYVADTENHLIRKIDLEAEMVSTVAGIGIQGTDKEGGAKGDEQPISSPWDVVFGRSGPEVQRDNILWIAMAGTHQIWALLLDCGRLPKKNELKKGTCLRFAGSGNEENRNNAYPHKAGFAQPSGLSLASEGPWSCLFVADSESSTVRTVSLKDGAVKHLVGGERDPMNLFAFGDVDGVGINARLQHPLGVTWDQKRNLLYVADSYNHKIKVVDPKTKNCTTLAGTGNASNMIGSSFTDSTFNEPGGLCIGENGQLLYVADTNNHQIKVLDLETKTVSVFPVFRSENAVVDGPCLAGKPKTLPKLPKSAPGIRLAPVAASPGQTLQFKLRLDLPSGTKLTEGASSCWFLSAEGNEWLLQGQIPSGEIESISNQPTISLQIPGDCLSLEAILSISVFLYYCSSDSSACMMKGILFSQPLQITDTQQDCIPPVELKYIF</sequence>
<feature type="chain" id="PRO_0000313807" description="NHL repeat-containing protein 2">
    <location>
        <begin position="1"/>
        <end position="726"/>
    </location>
</feature>
<feature type="repeat" description="NHL 1">
    <location>
        <begin position="212"/>
        <end position="254"/>
    </location>
</feature>
<feature type="repeat" description="NHL 2">
    <location>
        <begin position="265"/>
        <end position="307"/>
    </location>
</feature>
<feature type="repeat" description="NHL 3">
    <location>
        <begin position="335"/>
        <end position="369"/>
    </location>
</feature>
<feature type="repeat" description="NHL 4">
    <location>
        <begin position="409"/>
        <end position="439"/>
    </location>
</feature>
<feature type="repeat" description="NHL 5">
    <location>
        <begin position="461"/>
        <end position="505"/>
    </location>
</feature>
<feature type="repeat" description="NHL 6">
    <location>
        <begin position="518"/>
        <end position="562"/>
    </location>
</feature>
<dbReference type="EMBL" id="BC134430">
    <property type="protein sequence ID" value="AAI34431.1"/>
    <property type="molecule type" value="mRNA"/>
</dbReference>
<dbReference type="EMBL" id="BC134671">
    <property type="protein sequence ID" value="AAI34672.1"/>
    <property type="molecule type" value="mRNA"/>
</dbReference>
<dbReference type="RefSeq" id="NP_001077192.1">
    <property type="nucleotide sequence ID" value="NM_001083723.2"/>
</dbReference>
<dbReference type="SMR" id="A4IF69"/>
<dbReference type="FunCoup" id="A4IF69">
    <property type="interactions" value="2828"/>
</dbReference>
<dbReference type="STRING" id="9913.ENSBTAP00000004806"/>
<dbReference type="PaxDb" id="9913-ENSBTAP00000004806"/>
<dbReference type="GeneID" id="534327"/>
<dbReference type="KEGG" id="bta:534327"/>
<dbReference type="CTD" id="374354"/>
<dbReference type="VEuPathDB" id="HostDB:ENSBTAG00000003690"/>
<dbReference type="eggNOG" id="KOG2177">
    <property type="taxonomic scope" value="Eukaryota"/>
</dbReference>
<dbReference type="HOGENOM" id="CLU_013730_0_0_1"/>
<dbReference type="InParanoid" id="A4IF69"/>
<dbReference type="OMA" id="IAMAGVH"/>
<dbReference type="OrthoDB" id="273823at2759"/>
<dbReference type="TreeFam" id="TF323628"/>
<dbReference type="Reactome" id="R-BTA-114608">
    <property type="pathway name" value="Platelet degranulation"/>
</dbReference>
<dbReference type="Proteomes" id="UP000009136">
    <property type="component" value="Chromosome 26"/>
</dbReference>
<dbReference type="Bgee" id="ENSBTAG00000003690">
    <property type="expression patterns" value="Expressed in oocyte and 110 other cell types or tissues"/>
</dbReference>
<dbReference type="GO" id="GO:0005829">
    <property type="term" value="C:cytosol"/>
    <property type="evidence" value="ECO:0000250"/>
    <property type="project" value="UniProtKB"/>
</dbReference>
<dbReference type="CDD" id="cd14951">
    <property type="entry name" value="NHL-2_like"/>
    <property type="match status" value="1"/>
</dbReference>
<dbReference type="CDD" id="cd03012">
    <property type="entry name" value="TlpA_like_DipZ_like"/>
    <property type="match status" value="1"/>
</dbReference>
<dbReference type="FunFam" id="2.120.10.30:FF:000062">
    <property type="entry name" value="NHL repeat containing 2"/>
    <property type="match status" value="1"/>
</dbReference>
<dbReference type="FunFam" id="2.120.10.30:FF:000104">
    <property type="entry name" value="NHL repeat containing 2"/>
    <property type="match status" value="1"/>
</dbReference>
<dbReference type="FunFam" id="2.120.10.30:FF:000086">
    <property type="entry name" value="NHL repeat-containing protein 2"/>
    <property type="match status" value="1"/>
</dbReference>
<dbReference type="FunFam" id="3.40.30.10:FF:000108">
    <property type="entry name" value="NHL repeat-containing protein 2"/>
    <property type="match status" value="1"/>
</dbReference>
<dbReference type="Gene3D" id="3.40.30.10">
    <property type="entry name" value="Glutaredoxin"/>
    <property type="match status" value="1"/>
</dbReference>
<dbReference type="Gene3D" id="2.120.10.30">
    <property type="entry name" value="TolB, C-terminal domain"/>
    <property type="match status" value="3"/>
</dbReference>
<dbReference type="InterPro" id="IPR011042">
    <property type="entry name" value="6-blade_b-propeller_TolB-like"/>
</dbReference>
<dbReference type="InterPro" id="IPR000033">
    <property type="entry name" value="LDLR_classB_rpt"/>
</dbReference>
<dbReference type="InterPro" id="IPR045302">
    <property type="entry name" value="NHL2_NHL_rpt_dom"/>
</dbReference>
<dbReference type="InterPro" id="IPR001258">
    <property type="entry name" value="NHL_repeat"/>
</dbReference>
<dbReference type="InterPro" id="IPR012336">
    <property type="entry name" value="Thioredoxin-like_fold"/>
</dbReference>
<dbReference type="InterPro" id="IPR036249">
    <property type="entry name" value="Thioredoxin-like_sf"/>
</dbReference>
<dbReference type="PANTHER" id="PTHR46388">
    <property type="entry name" value="NHL REPEAT-CONTAINING PROTEIN 2"/>
    <property type="match status" value="1"/>
</dbReference>
<dbReference type="PANTHER" id="PTHR46388:SF2">
    <property type="entry name" value="NHL REPEAT-CONTAINING PROTEIN 2"/>
    <property type="match status" value="1"/>
</dbReference>
<dbReference type="Pfam" id="PF01436">
    <property type="entry name" value="NHL"/>
    <property type="match status" value="4"/>
</dbReference>
<dbReference type="Pfam" id="PF13905">
    <property type="entry name" value="Thioredoxin_8"/>
    <property type="match status" value="1"/>
</dbReference>
<dbReference type="SMART" id="SM00135">
    <property type="entry name" value="LY"/>
    <property type="match status" value="2"/>
</dbReference>
<dbReference type="SUPFAM" id="SSF101898">
    <property type="entry name" value="NHL repeat"/>
    <property type="match status" value="1"/>
</dbReference>
<dbReference type="SUPFAM" id="SSF52833">
    <property type="entry name" value="Thioredoxin-like"/>
    <property type="match status" value="1"/>
</dbReference>
<dbReference type="PROSITE" id="PS51125">
    <property type="entry name" value="NHL"/>
    <property type="match status" value="4"/>
</dbReference>
<gene>
    <name type="primary">NHLRC2</name>
</gene>
<accession>A4IF69</accession>
<accession>A7YWN6</accession>